<dbReference type="EMBL" id="AF276239">
    <property type="protein sequence ID" value="AAF86462.1"/>
    <property type="molecule type" value="mRNA"/>
</dbReference>
<dbReference type="PIR" id="A60381">
    <property type="entry name" value="A60381"/>
</dbReference>
<dbReference type="PDB" id="1A9V">
    <property type="method" value="NMR"/>
    <property type="chains" value="A=19-146"/>
</dbReference>
<dbReference type="PDB" id="1KTJ">
    <property type="method" value="X-ray"/>
    <property type="resolution" value="2.15 A"/>
    <property type="chains" value="A/B=18-146"/>
</dbReference>
<dbReference type="PDB" id="6OY4">
    <property type="method" value="X-ray"/>
    <property type="resolution" value="2.45 A"/>
    <property type="chains" value="A=18-146"/>
</dbReference>
<dbReference type="PDB" id="7MLH">
    <property type="method" value="X-ray"/>
    <property type="resolution" value="2.10 A"/>
    <property type="chains" value="B/F=18-146"/>
</dbReference>
<dbReference type="PDBsum" id="1A9V"/>
<dbReference type="PDBsum" id="1KTJ"/>
<dbReference type="PDBsum" id="6OY4"/>
<dbReference type="PDBsum" id="7MLH"/>
<dbReference type="SMR" id="P49278"/>
<dbReference type="DIP" id="DIP-59729N"/>
<dbReference type="IntAct" id="P49278">
    <property type="interactions" value="3"/>
</dbReference>
<dbReference type="Allergome" id="316">
    <property type="allergen name" value="Der p 2"/>
</dbReference>
<dbReference type="ABCD" id="P49278">
    <property type="antibodies" value="16 sequenced antibodies"/>
</dbReference>
<dbReference type="InParanoid" id="P49278"/>
<dbReference type="OrthoDB" id="6489064at2759"/>
<dbReference type="EvolutionaryTrace" id="P49278"/>
<dbReference type="Proteomes" id="UP000515146">
    <property type="component" value="Unplaced"/>
</dbReference>
<dbReference type="GO" id="GO:0005576">
    <property type="term" value="C:extracellular region"/>
    <property type="evidence" value="ECO:0007669"/>
    <property type="project" value="UniProtKB-SubCell"/>
</dbReference>
<dbReference type="GO" id="GO:0032934">
    <property type="term" value="F:sterol binding"/>
    <property type="evidence" value="ECO:0007669"/>
    <property type="project" value="InterPro"/>
</dbReference>
<dbReference type="GO" id="GO:0015918">
    <property type="term" value="P:sterol transport"/>
    <property type="evidence" value="ECO:0007669"/>
    <property type="project" value="InterPro"/>
</dbReference>
<dbReference type="CDD" id="cd00918">
    <property type="entry name" value="Der-p2_like"/>
    <property type="match status" value="1"/>
</dbReference>
<dbReference type="FunFam" id="2.60.40.770:FF:000001">
    <property type="entry name" value="NPC intracellular cholesterol transporter 2"/>
    <property type="match status" value="1"/>
</dbReference>
<dbReference type="Gene3D" id="2.60.40.770">
    <property type="match status" value="1"/>
</dbReference>
<dbReference type="InterPro" id="IPR014756">
    <property type="entry name" value="Ig_E-set"/>
</dbReference>
<dbReference type="InterPro" id="IPR003172">
    <property type="entry name" value="ML_dom"/>
</dbReference>
<dbReference type="InterPro" id="IPR039670">
    <property type="entry name" value="NPC2-like"/>
</dbReference>
<dbReference type="PANTHER" id="PTHR11306">
    <property type="entry name" value="NIEMANN PICK TYPE C2 PROTEIN NPC2-RELATED"/>
    <property type="match status" value="1"/>
</dbReference>
<dbReference type="PANTHER" id="PTHR11306:SF68">
    <property type="entry name" value="NPC INTRACELLULAR CHOLESTEROL TRANSPORTER 2"/>
    <property type="match status" value="1"/>
</dbReference>
<dbReference type="Pfam" id="PF02221">
    <property type="entry name" value="E1_DerP2_DerF2"/>
    <property type="match status" value="1"/>
</dbReference>
<dbReference type="SMART" id="SM00737">
    <property type="entry name" value="ML"/>
    <property type="match status" value="1"/>
</dbReference>
<dbReference type="SUPFAM" id="SSF81296">
    <property type="entry name" value="E set domains"/>
    <property type="match status" value="1"/>
</dbReference>
<organism>
    <name type="scientific">Dermatophagoides pteronyssinus</name>
    <name type="common">European house dust mite</name>
    <dbReference type="NCBI Taxonomy" id="6956"/>
    <lineage>
        <taxon>Eukaryota</taxon>
        <taxon>Metazoa</taxon>
        <taxon>Ecdysozoa</taxon>
        <taxon>Arthropoda</taxon>
        <taxon>Chelicerata</taxon>
        <taxon>Arachnida</taxon>
        <taxon>Acari</taxon>
        <taxon>Acariformes</taxon>
        <taxon>Sarcoptiformes</taxon>
        <taxon>Astigmata</taxon>
        <taxon>Psoroptidia</taxon>
        <taxon>Analgoidea</taxon>
        <taxon>Pyroglyphidae</taxon>
        <taxon>Dermatophagoidinae</taxon>
        <taxon>Dermatophagoides</taxon>
    </lineage>
</organism>
<keyword id="KW-0002">3D-structure</keyword>
<keyword id="KW-0020">Allergen</keyword>
<keyword id="KW-0903">Direct protein sequencing</keyword>
<keyword id="KW-1015">Disulfide bond</keyword>
<keyword id="KW-1185">Reference proteome</keyword>
<keyword id="KW-0964">Secreted</keyword>
<keyword id="KW-0732">Signal</keyword>
<proteinExistence type="evidence at protein level"/>
<evidence type="ECO:0000269" key="1">
    <source>
    </source>
</evidence>
<evidence type="ECO:0000305" key="2"/>
<evidence type="ECO:0007829" key="3">
    <source>
        <dbReference type="PDB" id="1A9V"/>
    </source>
</evidence>
<evidence type="ECO:0007829" key="4">
    <source>
        <dbReference type="PDB" id="7MLH"/>
    </source>
</evidence>
<gene>
    <name type="primary">DERP2</name>
</gene>
<reference key="1">
    <citation type="journal article" date="1990" name="Int. Arch. Allergy Appl. Immunol.">
        <title>Isolation of cDNA coding for the major mite allergen Der p II by IgE plaque immunoassay.</title>
        <authorList>
            <person name="Chua K.Y."/>
            <person name="Doyle C.R."/>
            <person name="Simpson R.J."/>
            <person name="Turner K.J."/>
            <person name="Stewart G.A."/>
            <person name="Thomas W.R."/>
        </authorList>
    </citation>
    <scope>NUCLEOTIDE SEQUENCE [MRNA]</scope>
</reference>
<reference key="2">
    <citation type="journal article" date="2001" name="J. Allergy Clin. Immunol.">
        <title>Allergens of wild house dust mites: environmental Der p 1 and Der p 2 sequence polymorphisms.</title>
        <authorList>
            <person name="Smith W.-A."/>
            <person name="Hales B.J."/>
            <person name="Jarnicki A.G."/>
            <person name="Thomas W.R."/>
        </authorList>
    </citation>
    <scope>NUCLEOTIDE SEQUENCE [MRNA]</scope>
    <scope>VARIANTS</scope>
</reference>
<reference key="3">
    <citation type="journal article" date="1989" name="J. Allergy Clin. Immunol.">
        <title>Antigenic and structural analysis of group II allergens (Der f II and Der p II) from house dust mites (Dermatophagoides spp).</title>
        <authorList>
            <person name="Heymann P.W."/>
            <person name="Chapman M.D."/>
            <person name="Aalberse R.C."/>
            <person name="Fox J.W."/>
            <person name="Platts-Mills T.A.E."/>
        </authorList>
    </citation>
    <scope>PROTEIN SEQUENCE OF 18-57</scope>
</reference>
<reference key="4">
    <citation type="journal article" date="1998" name="Biochemistry">
        <title>Tertiary structure of the major house dust mite allergen Der p 2: sequential and structural homologies.</title>
        <authorList>
            <person name="Mueller G.A."/>
            <person name="Benjamin D.C."/>
            <person name="Rule G.S."/>
        </authorList>
    </citation>
    <scope>STRUCTURE BY NMR</scope>
</reference>
<feature type="signal peptide" evidence="1">
    <location>
        <begin position="1"/>
        <end position="17"/>
    </location>
</feature>
<feature type="chain" id="PRO_0000019861" description="Mite group 2 allergen Der p 2">
    <location>
        <begin position="18"/>
        <end position="146"/>
    </location>
</feature>
<feature type="disulfide bond">
    <location>
        <begin position="25"/>
        <end position="136"/>
    </location>
</feature>
<feature type="disulfide bond">
    <location>
        <begin position="38"/>
        <end position="44"/>
    </location>
</feature>
<feature type="disulfide bond">
    <location>
        <begin position="90"/>
        <end position="95"/>
    </location>
</feature>
<feature type="sequence variant">
    <original>H</original>
    <variation>A</variation>
    <location>
        <position position="39"/>
    </location>
</feature>
<feature type="sequence variant">
    <original>G</original>
    <variation>L</variation>
    <location>
        <position position="40"/>
    </location>
</feature>
<feature type="sequence variant">
    <original>C</original>
    <variation>N</variation>
    <location>
        <position position="44"/>
    </location>
</feature>
<feature type="sequence variant">
    <original>H</original>
    <variation>S</variation>
    <location>
        <position position="47"/>
    </location>
</feature>
<feature type="sequence variant">
    <original>G</original>
    <variation>T</variation>
    <location>
        <position position="49"/>
    </location>
</feature>
<feature type="sequence variant">
    <original>A</original>
    <variation>Y</variation>
    <location>
        <position position="56"/>
    </location>
</feature>
<feature type="sequence variant">
    <original>V</original>
    <variation>L</variation>
    <location>
        <position position="57"/>
    </location>
</feature>
<feature type="sequence variant">
    <original>N</original>
    <variation>L</variation>
    <location>
        <position position="61"/>
    </location>
</feature>
<feature type="sequence variant">
    <original>T</original>
    <variation>S</variation>
    <location>
        <position position="64"/>
    </location>
</feature>
<feature type="sequence variant">
    <original>I</original>
    <variation>Y</variation>
    <location>
        <position position="75"/>
    </location>
</feature>
<feature type="sequence variant">
    <original>L</original>
    <variation>C</variation>
    <location>
        <position position="78"/>
    </location>
</feature>
<feature type="sequence variant">
    <original>D</original>
    <variation>V</variation>
    <location>
        <position position="81"/>
    </location>
</feature>
<feature type="sequence variant">
    <original>C</original>
    <variation>P</variation>
    <location>
        <position position="95"/>
    </location>
</feature>
<feature type="sequence variant">
    <original>V</original>
    <variation>T</variation>
    <location>
        <position position="98"/>
    </location>
</feature>
<feature type="sequence variant">
    <original>T</original>
    <variation>V</variation>
    <location>
        <position position="108"/>
    </location>
</feature>
<feature type="sequence variant">
    <original>V</original>
    <variation>L</variation>
    <location>
        <position position="111"/>
    </location>
</feature>
<feature type="sequence variant">
    <original>I</original>
    <variation>N</variation>
    <location>
        <position position="114"/>
    </location>
</feature>
<feature type="sequence variant">
    <original>A</original>
    <variation>T</variation>
    <location>
        <position position="115"/>
    </location>
</feature>
<feature type="sequence variant">
    <original>P</original>
    <variation>A</variation>
    <location>
        <position position="116"/>
    </location>
</feature>
<feature type="sequence variant">
    <original>S</original>
    <variation>A</variation>
    <location>
        <position position="118"/>
    </location>
</feature>
<feature type="sequence variant">
    <original>V</original>
    <variation>L</variation>
    <location>
        <position position="127"/>
    </location>
</feature>
<feature type="sequence variant">
    <original>M</original>
    <variation>L</variation>
    <location>
        <position position="128"/>
    </location>
</feature>
<feature type="sequence variant">
    <original>D</original>
    <variation>N</variation>
    <location>
        <position position="131"/>
    </location>
</feature>
<feature type="sequence variant">
    <original>V</original>
    <variation>A</variation>
    <location>
        <position position="133"/>
    </location>
</feature>
<feature type="sequence variant">
    <original>I</original>
    <variation>L</variation>
    <location>
        <position position="144"/>
    </location>
</feature>
<feature type="strand" evidence="4">
    <location>
        <begin position="23"/>
        <end position="28"/>
    </location>
</feature>
<feature type="strand" evidence="4">
    <location>
        <begin position="30"/>
        <end position="34"/>
    </location>
</feature>
<feature type="strand" evidence="3">
    <location>
        <begin position="40"/>
        <end position="42"/>
    </location>
</feature>
<feature type="strand" evidence="4">
    <location>
        <begin position="44"/>
        <end position="47"/>
    </location>
</feature>
<feature type="strand" evidence="4">
    <location>
        <begin position="50"/>
        <end position="59"/>
    </location>
</feature>
<feature type="strand" evidence="4">
    <location>
        <begin position="68"/>
        <end position="75"/>
    </location>
</feature>
<feature type="strand" evidence="4">
    <location>
        <begin position="78"/>
        <end position="80"/>
    </location>
</feature>
<feature type="helix" evidence="4">
    <location>
        <begin position="89"/>
        <end position="92"/>
    </location>
</feature>
<feature type="strand" evidence="4">
    <location>
        <begin position="95"/>
        <end position="97"/>
    </location>
</feature>
<feature type="strand" evidence="4">
    <location>
        <begin position="102"/>
        <end position="110"/>
    </location>
</feature>
<feature type="strand" evidence="4">
    <location>
        <begin position="121"/>
        <end position="129"/>
    </location>
</feature>
<feature type="strand" evidence="4">
    <location>
        <begin position="132"/>
        <end position="139"/>
    </location>
</feature>
<feature type="strand" evidence="4">
    <location>
        <begin position="142"/>
        <end position="145"/>
    </location>
</feature>
<protein>
    <recommendedName>
        <fullName>Mite group 2 allergen Der p 2</fullName>
    </recommendedName>
    <alternativeName>
        <fullName>Allergen Der p II</fullName>
    </alternativeName>
    <alternativeName>
        <fullName>DPX</fullName>
    </alternativeName>
    <allergenName>Der p 2</allergenName>
</protein>
<comment type="interaction">
    <interactant intactId="EBI-15745025">
        <id>P49278</id>
    </interactant>
    <interactant intactId="EBI-1539247">
        <id>Q9Y6Y9</id>
        <label>LY96</label>
    </interactant>
    <organismsDiffer>true</organismsDiffer>
    <experiments>2</experiments>
</comment>
<comment type="interaction">
    <interactant intactId="EBI-15745025">
        <id>P49278</id>
    </interactant>
    <interactant intactId="EBI-15745059">
        <id>O00206-1</id>
        <label>TLR4</label>
    </interactant>
    <organismsDiffer>true</organismsDiffer>
    <experiments>3</experiments>
</comment>
<comment type="subcellular location">
    <subcellularLocation>
        <location>Secreted</location>
    </subcellularLocation>
</comment>
<comment type="allergen">
    <text>Causes an allergic reaction in human. Common symptoms of mite allergy are bronchial asthma, allergic rhinitis and conjunctivitis.</text>
</comment>
<comment type="similarity">
    <text evidence="2">Belongs to the NPC2 family.</text>
</comment>
<accession>P49278</accession>
<sequence length="146" mass="15999">MMYKILCLSLLVAAVARDQVDVKDCANHEIKKVLVPGCHGSEPCIIHRGKPFQLEAVFEANQNTKTAKIEIKASIDGLEVDVPGIDPNACHYMKCPLVKGQQYDIKYTWNVPKIAPKSENVVVTVKVMGDDGVLACAIATHAKIRD</sequence>
<name>ALL2_DERPT</name>